<feature type="chain" id="PRO_0000279427" description="Sterile alpha motif domain-containing protein 15">
    <location>
        <begin position="1"/>
        <end position="674"/>
    </location>
</feature>
<feature type="domain" description="SAM" evidence="1">
    <location>
        <begin position="545"/>
        <end position="608"/>
    </location>
</feature>
<feature type="region of interest" description="Disordered" evidence="2">
    <location>
        <begin position="1"/>
        <end position="448"/>
    </location>
</feature>
<feature type="compositionally biased region" description="Acidic residues" evidence="2">
    <location>
        <begin position="1"/>
        <end position="18"/>
    </location>
</feature>
<feature type="compositionally biased region" description="Basic and acidic residues" evidence="2">
    <location>
        <begin position="87"/>
        <end position="142"/>
    </location>
</feature>
<feature type="compositionally biased region" description="Basic and acidic residues" evidence="2">
    <location>
        <begin position="195"/>
        <end position="223"/>
    </location>
</feature>
<feature type="compositionally biased region" description="Basic and acidic residues" evidence="2">
    <location>
        <begin position="236"/>
        <end position="274"/>
    </location>
</feature>
<feature type="compositionally biased region" description="Acidic residues" evidence="2">
    <location>
        <begin position="276"/>
        <end position="290"/>
    </location>
</feature>
<feature type="compositionally biased region" description="Basic and acidic residues" evidence="2">
    <location>
        <begin position="291"/>
        <end position="322"/>
    </location>
</feature>
<feature type="compositionally biased region" description="Basic and acidic residues" evidence="2">
    <location>
        <begin position="330"/>
        <end position="346"/>
    </location>
</feature>
<feature type="compositionally biased region" description="Basic and acidic residues" evidence="2">
    <location>
        <begin position="354"/>
        <end position="372"/>
    </location>
</feature>
<feature type="compositionally biased region" description="Basic and acidic residues" evidence="2">
    <location>
        <begin position="391"/>
        <end position="429"/>
    </location>
</feature>
<feature type="splice variant" id="VSP_023431" description="In isoform 2." evidence="3">
    <original>ECFITNF</original>
    <variation>VYKNKMF</variation>
    <location>
        <begin position="564"/>
        <end position="570"/>
    </location>
</feature>
<feature type="splice variant" id="VSP_023432" description="In isoform 2." evidence="3">
    <location>
        <begin position="571"/>
        <end position="674"/>
    </location>
</feature>
<feature type="sequence variant" id="VAR_030890" description="In dbSNP:rs11844594.">
    <original>L</original>
    <variation>P</variation>
    <location>
        <position position="18"/>
    </location>
</feature>
<feature type="sequence variant" id="VAR_061613" description="In dbSNP:rs45527334.">
    <original>M</original>
    <variation>I</variation>
    <location>
        <position position="168"/>
    </location>
</feature>
<feature type="sequence variant" id="VAR_030891" description="In dbSNP:rs4903576.">
    <original>K</original>
    <variation>E</variation>
    <location>
        <position position="370"/>
    </location>
</feature>
<feature type="sequence variant" id="VAR_030892" description="In dbSNP:rs2193595.">
    <original>K</original>
    <variation>E</variation>
    <location>
        <position position="454"/>
    </location>
</feature>
<organism>
    <name type="scientific">Homo sapiens</name>
    <name type="common">Human</name>
    <dbReference type="NCBI Taxonomy" id="9606"/>
    <lineage>
        <taxon>Eukaryota</taxon>
        <taxon>Metazoa</taxon>
        <taxon>Chordata</taxon>
        <taxon>Craniata</taxon>
        <taxon>Vertebrata</taxon>
        <taxon>Euteleostomi</taxon>
        <taxon>Mammalia</taxon>
        <taxon>Eutheria</taxon>
        <taxon>Euarchontoglires</taxon>
        <taxon>Primates</taxon>
        <taxon>Haplorrhini</taxon>
        <taxon>Catarrhini</taxon>
        <taxon>Hominidae</taxon>
        <taxon>Homo</taxon>
    </lineage>
</organism>
<protein>
    <recommendedName>
        <fullName>Sterile alpha motif domain-containing protein 15</fullName>
        <shortName>SAM domain-containing protein 15</shortName>
    </recommendedName>
</protein>
<comment type="alternative products">
    <event type="alternative splicing"/>
    <isoform>
        <id>Q9P1V8-1</id>
        <name>1</name>
        <sequence type="displayed"/>
    </isoform>
    <isoform>
        <id>Q9P1V8-2</id>
        <name>2</name>
        <sequence type="described" ref="VSP_023431 VSP_023432"/>
    </isoform>
</comment>
<accession>Q9P1V8</accession>
<accession>Q2M3P3</accession>
<gene>
    <name type="primary">SAMD15</name>
    <name type="synonym">C14orf174</name>
    <name type="synonym">FAM15A</name>
</gene>
<proteinExistence type="evidence at protein level"/>
<name>SAM15_HUMAN</name>
<sequence length="674" mass="77151">MAEVPEDYDSGPDEDGELEPERPELPGLHKLYENAEPDTMAKADSKLPAEIYQEPQPETEEEDFKEGEPDSAKNVQLKPGGTSQEGIAKESKRDVPSETEPGIHQEVKSETSREMGEFFKDLEAPMDETHKESDLEPPEEAKPNVTEDVFLESAMETDPDPVPPTETMSEVSGATVRERNLELLEEETEPGVPEESLRVQHEETGLEPPEQTKQDFPSEKLGESLEETDLQPPKMTKPETPEETQRESTEKKRTEPPEQARLEFLEKEPRKSSEEAGLEPPEETQPEVPEEMQRKATEEKGTELPERTKPDFPDHKPRKSTDENVPEPLEEIKLEFPEEESRKTNEETILEQSEMMKPESPEEIRKSNEKKNPQPPEETGPVLPQEINPQVEEKTQTKPTEKILELPDETKPRETHVEFSKEDRPEPIKSKYSVGNDELEHREPKRGKLSLSDKFRKEYYALGSLRESEESIGTHYEFLQPLQKLLNVSEECSYSDPSESQTELSEFVHEKEVVDLSQELKERVSEDDETQPEKGTELQFEHLNWDPEEVAEWISQLGFPQYKECFITNFISGRKLIHVNCSNLPQMGITNFEDMKAISRHTQELLEIEEPLFKRSISLPYRDIIGLYLEQKGHTGIKSDSLTLSEFVKAAGLQDYAPEITAPEENEELPCTEP</sequence>
<keyword id="KW-0025">Alternative splicing</keyword>
<keyword id="KW-1267">Proteomics identification</keyword>
<keyword id="KW-1185">Reference proteome</keyword>
<dbReference type="EMBL" id="AC007954">
    <property type="protein sequence ID" value="AAF62561.1"/>
    <property type="molecule type" value="Genomic_DNA"/>
</dbReference>
<dbReference type="EMBL" id="BC104834">
    <property type="protein sequence ID" value="AAI04835.1"/>
    <property type="molecule type" value="mRNA"/>
</dbReference>
<dbReference type="EMBL" id="BC104836">
    <property type="protein sequence ID" value="AAI04837.1"/>
    <property type="molecule type" value="mRNA"/>
</dbReference>
<dbReference type="CCDS" id="CCDS32126.1">
    <molecule id="Q9P1V8-1"/>
</dbReference>
<dbReference type="RefSeq" id="NP_001010860.1">
    <molecule id="Q9P1V8-1"/>
    <property type="nucleotide sequence ID" value="NM_001010860.4"/>
</dbReference>
<dbReference type="SMR" id="Q9P1V8"/>
<dbReference type="BioGRID" id="127788">
    <property type="interactions" value="4"/>
</dbReference>
<dbReference type="FunCoup" id="Q9P1V8">
    <property type="interactions" value="2"/>
</dbReference>
<dbReference type="STRING" id="9606.ENSP00000216471"/>
<dbReference type="iPTMnet" id="Q9P1V8"/>
<dbReference type="PhosphoSitePlus" id="Q9P1V8"/>
<dbReference type="BioMuta" id="SAMD15"/>
<dbReference type="DMDM" id="74753112"/>
<dbReference type="jPOST" id="Q9P1V8"/>
<dbReference type="MassIVE" id="Q9P1V8"/>
<dbReference type="PaxDb" id="9606-ENSP00000216471"/>
<dbReference type="PeptideAtlas" id="Q9P1V8"/>
<dbReference type="ProteomicsDB" id="83669">
    <molecule id="Q9P1V8-1"/>
</dbReference>
<dbReference type="ProteomicsDB" id="83670">
    <molecule id="Q9P1V8-2"/>
</dbReference>
<dbReference type="Antibodypedia" id="26042">
    <property type="antibodies" value="47 antibodies from 13 providers"/>
</dbReference>
<dbReference type="DNASU" id="161394"/>
<dbReference type="Ensembl" id="ENST00000216471.5">
    <molecule id="Q9P1V8-1"/>
    <property type="protein sequence ID" value="ENSP00000216471.4"/>
    <property type="gene ID" value="ENSG00000100583.5"/>
</dbReference>
<dbReference type="GeneID" id="161394"/>
<dbReference type="KEGG" id="hsa:161394"/>
<dbReference type="MANE-Select" id="ENST00000216471.5">
    <property type="protein sequence ID" value="ENSP00000216471.4"/>
    <property type="RefSeq nucleotide sequence ID" value="NM_001010860.4"/>
    <property type="RefSeq protein sequence ID" value="NP_001010860.1"/>
</dbReference>
<dbReference type="UCSC" id="uc001xtq.2">
    <molecule id="Q9P1V8-1"/>
    <property type="organism name" value="human"/>
</dbReference>
<dbReference type="AGR" id="HGNC:18631"/>
<dbReference type="CTD" id="161394"/>
<dbReference type="DisGeNET" id="161394"/>
<dbReference type="GeneCards" id="SAMD15"/>
<dbReference type="HGNC" id="HGNC:18631">
    <property type="gene designation" value="SAMD15"/>
</dbReference>
<dbReference type="HPA" id="ENSG00000100583">
    <property type="expression patterns" value="Tissue enhanced (retina, testis)"/>
</dbReference>
<dbReference type="neXtProt" id="NX_Q9P1V8"/>
<dbReference type="OpenTargets" id="ENSG00000100583"/>
<dbReference type="PharmGKB" id="PA134903169"/>
<dbReference type="VEuPathDB" id="HostDB:ENSG00000100583"/>
<dbReference type="eggNOG" id="ENOG502S3Z4">
    <property type="taxonomic scope" value="Eukaryota"/>
</dbReference>
<dbReference type="GeneTree" id="ENSGT00630000089942"/>
<dbReference type="HOGENOM" id="CLU_028120_0_0_1"/>
<dbReference type="InParanoid" id="Q9P1V8"/>
<dbReference type="OMA" id="PMDETHE"/>
<dbReference type="OrthoDB" id="6133291at2759"/>
<dbReference type="PAN-GO" id="Q9P1V8">
    <property type="GO annotations" value="0 GO annotations based on evolutionary models"/>
</dbReference>
<dbReference type="PhylomeDB" id="Q9P1V8"/>
<dbReference type="TreeFam" id="TF351017"/>
<dbReference type="PathwayCommons" id="Q9P1V8"/>
<dbReference type="BioGRID-ORCS" id="161394">
    <property type="hits" value="15 hits in 1147 CRISPR screens"/>
</dbReference>
<dbReference type="GenomeRNAi" id="161394"/>
<dbReference type="Pharos" id="Q9P1V8">
    <property type="development level" value="Tdark"/>
</dbReference>
<dbReference type="PRO" id="PR:Q9P1V8"/>
<dbReference type="Proteomes" id="UP000005640">
    <property type="component" value="Chromosome 14"/>
</dbReference>
<dbReference type="RNAct" id="Q9P1V8">
    <property type="molecule type" value="protein"/>
</dbReference>
<dbReference type="Bgee" id="ENSG00000100583">
    <property type="expression patterns" value="Expressed in sperm and 124 other cell types or tissues"/>
</dbReference>
<dbReference type="ExpressionAtlas" id="Q9P1V8">
    <property type="expression patterns" value="baseline and differential"/>
</dbReference>
<dbReference type="GO" id="GO:0043539">
    <property type="term" value="F:protein serine/threonine kinase activator activity"/>
    <property type="evidence" value="ECO:0000318"/>
    <property type="project" value="GO_Central"/>
</dbReference>
<dbReference type="GO" id="GO:0007165">
    <property type="term" value="P:signal transduction"/>
    <property type="evidence" value="ECO:0000318"/>
    <property type="project" value="GO_Central"/>
</dbReference>
<dbReference type="CDD" id="cd09530">
    <property type="entry name" value="SAM_Samd14"/>
    <property type="match status" value="1"/>
</dbReference>
<dbReference type="Gene3D" id="1.10.150.50">
    <property type="entry name" value="Transcription Factor, Ets-1"/>
    <property type="match status" value="1"/>
</dbReference>
<dbReference type="InterPro" id="IPR001660">
    <property type="entry name" value="SAM"/>
</dbReference>
<dbReference type="InterPro" id="IPR013761">
    <property type="entry name" value="SAM/pointed_sf"/>
</dbReference>
<dbReference type="PANTHER" id="PTHR46829">
    <property type="entry name" value="STERILE ALPHA MOTIF DOMAIN-CONTAINING PROTEIN 15"/>
    <property type="match status" value="1"/>
</dbReference>
<dbReference type="PANTHER" id="PTHR46829:SF1">
    <property type="entry name" value="STERILE ALPHA MOTIF DOMAIN-CONTAINING PROTEIN 15"/>
    <property type="match status" value="1"/>
</dbReference>
<dbReference type="Pfam" id="PF07647">
    <property type="entry name" value="SAM_2"/>
    <property type="match status" value="1"/>
</dbReference>
<dbReference type="SMART" id="SM00454">
    <property type="entry name" value="SAM"/>
    <property type="match status" value="1"/>
</dbReference>
<dbReference type="SUPFAM" id="SSF47769">
    <property type="entry name" value="SAM/Pointed domain"/>
    <property type="match status" value="1"/>
</dbReference>
<dbReference type="PROSITE" id="PS50105">
    <property type="entry name" value="SAM_DOMAIN"/>
    <property type="match status" value="1"/>
</dbReference>
<evidence type="ECO:0000255" key="1">
    <source>
        <dbReference type="PROSITE-ProRule" id="PRU00184"/>
    </source>
</evidence>
<evidence type="ECO:0000256" key="2">
    <source>
        <dbReference type="SAM" id="MobiDB-lite"/>
    </source>
</evidence>
<evidence type="ECO:0000303" key="3">
    <source>
    </source>
</evidence>
<reference key="1">
    <citation type="journal article" date="2003" name="Nature">
        <title>The DNA sequence and analysis of human chromosome 14.</title>
        <authorList>
            <person name="Heilig R."/>
            <person name="Eckenberg R."/>
            <person name="Petit J.-L."/>
            <person name="Fonknechten N."/>
            <person name="Da Silva C."/>
            <person name="Cattolico L."/>
            <person name="Levy M."/>
            <person name="Barbe V."/>
            <person name="De Berardinis V."/>
            <person name="Ureta-Vidal A."/>
            <person name="Pelletier E."/>
            <person name="Vico V."/>
            <person name="Anthouard V."/>
            <person name="Rowen L."/>
            <person name="Madan A."/>
            <person name="Qin S."/>
            <person name="Sun H."/>
            <person name="Du H."/>
            <person name="Pepin K."/>
            <person name="Artiguenave F."/>
            <person name="Robert C."/>
            <person name="Cruaud C."/>
            <person name="Bruels T."/>
            <person name="Jaillon O."/>
            <person name="Friedlander L."/>
            <person name="Samson G."/>
            <person name="Brottier P."/>
            <person name="Cure S."/>
            <person name="Segurens B."/>
            <person name="Aniere F."/>
            <person name="Samain S."/>
            <person name="Crespeau H."/>
            <person name="Abbasi N."/>
            <person name="Aiach N."/>
            <person name="Boscus D."/>
            <person name="Dickhoff R."/>
            <person name="Dors M."/>
            <person name="Dubois I."/>
            <person name="Friedman C."/>
            <person name="Gouyvenoux M."/>
            <person name="James R."/>
            <person name="Madan A."/>
            <person name="Mairey-Estrada B."/>
            <person name="Mangenot S."/>
            <person name="Martins N."/>
            <person name="Menard M."/>
            <person name="Oztas S."/>
            <person name="Ratcliffe A."/>
            <person name="Shaffer T."/>
            <person name="Trask B."/>
            <person name="Vacherie B."/>
            <person name="Bellemere C."/>
            <person name="Belser C."/>
            <person name="Besnard-Gonnet M."/>
            <person name="Bartol-Mavel D."/>
            <person name="Boutard M."/>
            <person name="Briez-Silla S."/>
            <person name="Combette S."/>
            <person name="Dufosse-Laurent V."/>
            <person name="Ferron C."/>
            <person name="Lechaplais C."/>
            <person name="Louesse C."/>
            <person name="Muselet D."/>
            <person name="Magdelenat G."/>
            <person name="Pateau E."/>
            <person name="Petit E."/>
            <person name="Sirvain-Trukniewicz P."/>
            <person name="Trybou A."/>
            <person name="Vega-Czarny N."/>
            <person name="Bataille E."/>
            <person name="Bluet E."/>
            <person name="Bordelais I."/>
            <person name="Dubois M."/>
            <person name="Dumont C."/>
            <person name="Guerin T."/>
            <person name="Haffray S."/>
            <person name="Hammadi R."/>
            <person name="Muanga J."/>
            <person name="Pellouin V."/>
            <person name="Robert D."/>
            <person name="Wunderle E."/>
            <person name="Gauguet G."/>
            <person name="Roy A."/>
            <person name="Sainte-Marthe L."/>
            <person name="Verdier J."/>
            <person name="Verdier-Discala C."/>
            <person name="Hillier L.W."/>
            <person name="Fulton L."/>
            <person name="McPherson J."/>
            <person name="Matsuda F."/>
            <person name="Wilson R."/>
            <person name="Scarpelli C."/>
            <person name="Gyapay G."/>
            <person name="Wincker P."/>
            <person name="Saurin W."/>
            <person name="Quetier F."/>
            <person name="Waterston R."/>
            <person name="Hood L."/>
            <person name="Weissenbach J."/>
        </authorList>
    </citation>
    <scope>NUCLEOTIDE SEQUENCE [LARGE SCALE GENOMIC DNA]</scope>
</reference>
<reference key="2">
    <citation type="journal article" date="2004" name="Genome Res.">
        <title>The status, quality, and expansion of the NIH full-length cDNA project: the Mammalian Gene Collection (MGC).</title>
        <authorList>
            <consortium name="The MGC Project Team"/>
        </authorList>
    </citation>
    <scope>NUCLEOTIDE SEQUENCE [LARGE SCALE MRNA] (ISOFORM 2)</scope>
    <source>
        <tissue>Brain</tissue>
    </source>
</reference>